<feature type="chain" id="PRO_0000065558" description="Uncharacterized protein ZK1098.6">
    <location>
        <begin position="1"/>
        <end position="269"/>
    </location>
</feature>
<feature type="coiled-coil region" evidence="1">
    <location>
        <begin position="52"/>
        <end position="262"/>
    </location>
</feature>
<proteinExistence type="predicted"/>
<evidence type="ECO:0000255" key="1"/>
<gene>
    <name type="ORF">ZK1098.6</name>
</gene>
<sequence length="269" mass="31421">MSANSEDQSAQLSLHLDNEWSFNFGSETLNASQLDKSQDQTIFENNSILVDKNVYEQLVATCDAMKAQLHQLMEMVDEKTFDDQNQNSEEMKLILKERDELKKKVDQKSKETVHWTKKYYKLKAYGQEILKKRENEIKLLKSEVVDGKKKLNEIVETINHLEDAANKEKIKRKNVESEMRKADKIIKDALREEMEARKQSQKEYLLEKTERMALEEKISENAASARGVIVRSTCPVADHHILNQRIDVLQRQRKILVESINKRDSPIHH</sequence>
<name>YO66_CAEEL</name>
<dbReference type="EMBL" id="Z22176">
    <property type="protein sequence ID" value="CAA80134.2"/>
    <property type="molecule type" value="Genomic_DNA"/>
</dbReference>
<dbReference type="PIR" id="S40929">
    <property type="entry name" value="S40929"/>
</dbReference>
<dbReference type="RefSeq" id="NP_499101.2">
    <property type="nucleotide sequence ID" value="NM_066700.3"/>
</dbReference>
<dbReference type="SMR" id="P34606"/>
<dbReference type="PaxDb" id="6239-ZK1098.6"/>
<dbReference type="EnsemblMetazoa" id="ZK1098.6.1">
    <property type="protein sequence ID" value="ZK1098.6.1"/>
    <property type="gene ID" value="WBGene00014223"/>
</dbReference>
<dbReference type="GeneID" id="191522"/>
<dbReference type="KEGG" id="cel:CELE_ZK1098.6"/>
<dbReference type="UCSC" id="ZK1098.6">
    <property type="organism name" value="c. elegans"/>
</dbReference>
<dbReference type="AGR" id="WB:WBGene00014223"/>
<dbReference type="CTD" id="191522"/>
<dbReference type="WormBase" id="ZK1098.6">
    <property type="protein sequence ID" value="CE44285"/>
    <property type="gene ID" value="WBGene00014223"/>
</dbReference>
<dbReference type="eggNOG" id="ENOG502QRRG">
    <property type="taxonomic scope" value="Eukaryota"/>
</dbReference>
<dbReference type="HOGENOM" id="CLU_1035254_0_0_1"/>
<dbReference type="InParanoid" id="P34606"/>
<dbReference type="OrthoDB" id="5876843at2759"/>
<dbReference type="PhylomeDB" id="P34606"/>
<dbReference type="PRO" id="PR:P34606"/>
<dbReference type="Proteomes" id="UP000001940">
    <property type="component" value="Chromosome III"/>
</dbReference>
<dbReference type="Bgee" id="WBGene00014223">
    <property type="expression patterns" value="Expressed in adult organism and 3 other cell types or tissues"/>
</dbReference>
<protein>
    <recommendedName>
        <fullName>Uncharacterized protein ZK1098.6</fullName>
    </recommendedName>
</protein>
<organism>
    <name type="scientific">Caenorhabditis elegans</name>
    <dbReference type="NCBI Taxonomy" id="6239"/>
    <lineage>
        <taxon>Eukaryota</taxon>
        <taxon>Metazoa</taxon>
        <taxon>Ecdysozoa</taxon>
        <taxon>Nematoda</taxon>
        <taxon>Chromadorea</taxon>
        <taxon>Rhabditida</taxon>
        <taxon>Rhabditina</taxon>
        <taxon>Rhabditomorpha</taxon>
        <taxon>Rhabditoidea</taxon>
        <taxon>Rhabditidae</taxon>
        <taxon>Peloderinae</taxon>
        <taxon>Caenorhabditis</taxon>
    </lineage>
</organism>
<reference key="1">
    <citation type="journal article" date="1994" name="Nature">
        <title>2.2 Mb of contiguous nucleotide sequence from chromosome III of C. elegans.</title>
        <authorList>
            <person name="Wilson R."/>
            <person name="Ainscough R."/>
            <person name="Anderson K."/>
            <person name="Baynes C."/>
            <person name="Berks M."/>
            <person name="Bonfield J."/>
            <person name="Burton J."/>
            <person name="Connell M."/>
            <person name="Copsey T."/>
            <person name="Cooper J."/>
            <person name="Coulson A."/>
            <person name="Craxton M."/>
            <person name="Dear S."/>
            <person name="Du Z."/>
            <person name="Durbin R."/>
            <person name="Favello A."/>
            <person name="Fraser A."/>
            <person name="Fulton L."/>
            <person name="Gardner A."/>
            <person name="Green P."/>
            <person name="Hawkins T."/>
            <person name="Hillier L."/>
            <person name="Jier M."/>
            <person name="Johnston L."/>
            <person name="Jones M."/>
            <person name="Kershaw J."/>
            <person name="Kirsten J."/>
            <person name="Laisster N."/>
            <person name="Latreille P."/>
            <person name="Lightning J."/>
            <person name="Lloyd C."/>
            <person name="Mortimore B."/>
            <person name="O'Callaghan M."/>
            <person name="Parsons J."/>
            <person name="Percy C."/>
            <person name="Rifken L."/>
            <person name="Roopra A."/>
            <person name="Saunders D."/>
            <person name="Shownkeen R."/>
            <person name="Sims M."/>
            <person name="Smaldon N."/>
            <person name="Smith A."/>
            <person name="Smith M."/>
            <person name="Sonnhammer E."/>
            <person name="Staden R."/>
            <person name="Sulston J."/>
            <person name="Thierry-Mieg J."/>
            <person name="Thomas K."/>
            <person name="Vaudin M."/>
            <person name="Vaughan K."/>
            <person name="Waterston R."/>
            <person name="Watson A."/>
            <person name="Weinstock L."/>
            <person name="Wilkinson-Sproat J."/>
            <person name="Wohldman P."/>
        </authorList>
    </citation>
    <scope>NUCLEOTIDE SEQUENCE [LARGE SCALE GENOMIC DNA]</scope>
    <source>
        <strain>Bristol N2</strain>
    </source>
</reference>
<reference key="2">
    <citation type="journal article" date="1998" name="Science">
        <title>Genome sequence of the nematode C. elegans: a platform for investigating biology.</title>
        <authorList>
            <consortium name="The C. elegans sequencing consortium"/>
        </authorList>
    </citation>
    <scope>NUCLEOTIDE SEQUENCE [LARGE SCALE GENOMIC DNA]</scope>
    <source>
        <strain>Bristol N2</strain>
    </source>
</reference>
<keyword id="KW-0175">Coiled coil</keyword>
<keyword id="KW-1185">Reference proteome</keyword>
<accession>P34606</accession>